<sequence>MAKKVTVTLVDDFDGSGAADETVEFGLDGVTYEIDLSTKNATKLRGDLKQWVAAGRRVGGRRRGRSGSGRGRGAIDREQSAAIREWARRNGHNVSTRGRIPADVIDAYHAAT</sequence>
<accession>P65649</accession>
<accession>A0A1R3Y683</accession>
<accession>O06285</accession>
<accession>X2BP54</accession>
<evidence type="ECO:0000250" key="1">
    <source>
        <dbReference type="UniProtKB" id="P9WIP7"/>
    </source>
</evidence>
<evidence type="ECO:0000256" key="2">
    <source>
        <dbReference type="SAM" id="MobiDB-lite"/>
    </source>
</evidence>
<evidence type="ECO:0000305" key="3"/>
<dbReference type="EMBL" id="LT708304">
    <property type="protein sequence ID" value="SIU02255.1"/>
    <property type="molecule type" value="Genomic_DNA"/>
</dbReference>
<dbReference type="RefSeq" id="NP_857267.1">
    <property type="nucleotide sequence ID" value="NC_002945.3"/>
</dbReference>
<dbReference type="RefSeq" id="WP_003419513.1">
    <property type="nucleotide sequence ID" value="NC_002945.4"/>
</dbReference>
<dbReference type="BMRB" id="P65649"/>
<dbReference type="SMR" id="P65649"/>
<dbReference type="GeneID" id="45427584"/>
<dbReference type="KEGG" id="mbo:BQ2027_MB3628C"/>
<dbReference type="PATRIC" id="fig|233413.5.peg.3974"/>
<dbReference type="Proteomes" id="UP000001419">
    <property type="component" value="Chromosome"/>
</dbReference>
<dbReference type="GO" id="GO:0005737">
    <property type="term" value="C:cytoplasm"/>
    <property type="evidence" value="ECO:0007669"/>
    <property type="project" value="UniProtKB-KW"/>
</dbReference>
<dbReference type="GO" id="GO:0009295">
    <property type="term" value="C:nucleoid"/>
    <property type="evidence" value="ECO:0007669"/>
    <property type="project" value="UniProtKB-SubCell"/>
</dbReference>
<dbReference type="GO" id="GO:0016746">
    <property type="term" value="F:acyltransferase activity"/>
    <property type="evidence" value="ECO:0007669"/>
    <property type="project" value="InterPro"/>
</dbReference>
<dbReference type="GO" id="GO:0003677">
    <property type="term" value="F:DNA binding"/>
    <property type="evidence" value="ECO:0007669"/>
    <property type="project" value="UniProtKB-KW"/>
</dbReference>
<dbReference type="FunFam" id="3.30.60.230:FF:000001">
    <property type="entry name" value="Nucleoid-associated protein Lsr2"/>
    <property type="match status" value="1"/>
</dbReference>
<dbReference type="FunFam" id="4.10.320.10:FF:000004">
    <property type="entry name" value="Nucleoid-associated protein Lsr2"/>
    <property type="match status" value="1"/>
</dbReference>
<dbReference type="Gene3D" id="4.10.320.10">
    <property type="entry name" value="E3-binding domain"/>
    <property type="match status" value="1"/>
</dbReference>
<dbReference type="Gene3D" id="3.30.60.230">
    <property type="entry name" value="Lsr2, dimerization domain"/>
    <property type="match status" value="1"/>
</dbReference>
<dbReference type="InterPro" id="IPR036625">
    <property type="entry name" value="E3-bd_dom_sf"/>
</dbReference>
<dbReference type="InterPro" id="IPR042261">
    <property type="entry name" value="Lsr2-like_dimerization"/>
</dbReference>
<dbReference type="InterPro" id="IPR024412">
    <property type="entry name" value="Lsr2_dim_dom"/>
</dbReference>
<dbReference type="InterPro" id="IPR055370">
    <property type="entry name" value="Lsr2_DNA-bd"/>
</dbReference>
<dbReference type="Pfam" id="PF11774">
    <property type="entry name" value="Lsr2"/>
    <property type="match status" value="1"/>
</dbReference>
<dbReference type="Pfam" id="PF23359">
    <property type="entry name" value="Lsr2_DNA-bd"/>
    <property type="match status" value="1"/>
</dbReference>
<feature type="chain" id="PRO_0000021623" description="Nucleoid-associated protein Lsr2">
    <location>
        <begin position="1"/>
        <end position="112"/>
    </location>
</feature>
<feature type="DNA-binding region" evidence="1">
    <location>
        <begin position="97"/>
        <end position="102"/>
    </location>
</feature>
<feature type="region of interest" description="Disordered" evidence="2">
    <location>
        <begin position="57"/>
        <end position="79"/>
    </location>
</feature>
<name>LSR2_MYCBO</name>
<keyword id="KW-0963">Cytoplasm</keyword>
<keyword id="KW-0238">DNA-binding</keyword>
<keyword id="KW-1185">Reference proteome</keyword>
<keyword id="KW-0678">Repressor</keyword>
<keyword id="KW-0804">Transcription</keyword>
<keyword id="KW-0805">Transcription regulation</keyword>
<keyword id="KW-0843">Virulence</keyword>
<comment type="function">
    <text evidence="1">DNA-bridging protein that has both architectural and regulatory roles. Influences the organization of chromatin and gene expression by binding non-specifically to DNA, with a preference for AT-rich sequences, and bridging distant DNA segments. Represses expression of multiple genes involved in a broad range of cellular processes. May coordinate global gene regulation and virulence as well as genes important for adaptation to changing O(2) levels. Protects against reactive oxygen intermediates (By similarity).</text>
</comment>
<comment type="subunit">
    <text evidence="1">Homodimer.</text>
</comment>
<comment type="subcellular location">
    <subcellularLocation>
        <location evidence="1">Cytoplasm</location>
        <location evidence="1">Nucleoid</location>
    </subcellularLocation>
</comment>
<comment type="domain">
    <text evidence="1">The C-terminal domain binds DNA and the N-terminal domain is involved in dimerization. Both domains are essential for normal function (By similarity).</text>
</comment>
<comment type="similarity">
    <text evidence="3">Belongs to the Lsr2 family.</text>
</comment>
<gene>
    <name type="primary">lsr2</name>
    <name type="ordered locus">BQ2027_MB3628C</name>
</gene>
<organism>
    <name type="scientific">Mycobacterium bovis (strain ATCC BAA-935 / AF2122/97)</name>
    <dbReference type="NCBI Taxonomy" id="233413"/>
    <lineage>
        <taxon>Bacteria</taxon>
        <taxon>Bacillati</taxon>
        <taxon>Actinomycetota</taxon>
        <taxon>Actinomycetes</taxon>
        <taxon>Mycobacteriales</taxon>
        <taxon>Mycobacteriaceae</taxon>
        <taxon>Mycobacterium</taxon>
        <taxon>Mycobacterium tuberculosis complex</taxon>
    </lineage>
</organism>
<proteinExistence type="inferred from homology"/>
<protein>
    <recommendedName>
        <fullName>Nucleoid-associated protein Lsr2</fullName>
    </recommendedName>
</protein>
<reference key="1">
    <citation type="journal article" date="2003" name="Proc. Natl. Acad. Sci. U.S.A.">
        <title>The complete genome sequence of Mycobacterium bovis.</title>
        <authorList>
            <person name="Garnier T."/>
            <person name="Eiglmeier K."/>
            <person name="Camus J.-C."/>
            <person name="Medina N."/>
            <person name="Mansoor H."/>
            <person name="Pryor M."/>
            <person name="Duthoy S."/>
            <person name="Grondin S."/>
            <person name="Lacroix C."/>
            <person name="Monsempe C."/>
            <person name="Simon S."/>
            <person name="Harris B."/>
            <person name="Atkin R."/>
            <person name="Doggett J."/>
            <person name="Mayes R."/>
            <person name="Keating L."/>
            <person name="Wheeler P.R."/>
            <person name="Parkhill J."/>
            <person name="Barrell B.G."/>
            <person name="Cole S.T."/>
            <person name="Gordon S.V."/>
            <person name="Hewinson R.G."/>
        </authorList>
    </citation>
    <scope>NUCLEOTIDE SEQUENCE [LARGE SCALE GENOMIC DNA]</scope>
    <source>
        <strain>ATCC BAA-935 / AF2122/97</strain>
    </source>
</reference>
<reference key="2">
    <citation type="journal article" date="2017" name="Genome Announc.">
        <title>Updated reference genome sequence and annotation of Mycobacterium bovis AF2122/97.</title>
        <authorList>
            <person name="Malone K.M."/>
            <person name="Farrell D."/>
            <person name="Stuber T.P."/>
            <person name="Schubert O.T."/>
            <person name="Aebersold R."/>
            <person name="Robbe-Austerman S."/>
            <person name="Gordon S.V."/>
        </authorList>
    </citation>
    <scope>NUCLEOTIDE SEQUENCE [LARGE SCALE GENOMIC DNA]</scope>
    <scope>GENOME REANNOTATION</scope>
    <source>
        <strain>ATCC BAA-935 / AF2122/97</strain>
    </source>
</reference>